<proteinExistence type="evidence at protein level"/>
<keyword id="KW-0067">ATP-binding</keyword>
<keyword id="KW-0175">Coiled coil</keyword>
<keyword id="KW-0479">Metal-binding</keyword>
<keyword id="KW-0547">Nucleotide-binding</keyword>
<keyword id="KW-1185">Reference proteome</keyword>
<keyword id="KW-0677">Repeat</keyword>
<keyword id="KW-0862">Zinc</keyword>
<dbReference type="EMBL" id="AC012188">
    <property type="protein sequence ID" value="AAF43947.1"/>
    <property type="status" value="ALT_SEQ"/>
    <property type="molecule type" value="Genomic_DNA"/>
</dbReference>
<dbReference type="EMBL" id="CP002684">
    <property type="protein sequence ID" value="AEE29167.1"/>
    <property type="molecule type" value="Genomic_DNA"/>
</dbReference>
<dbReference type="PIR" id="D86279">
    <property type="entry name" value="D86279"/>
</dbReference>
<dbReference type="RefSeq" id="NP_172898.2">
    <property type="nucleotide sequence ID" value="NM_101313.3"/>
</dbReference>
<dbReference type="SMR" id="F4HW65"/>
<dbReference type="FunCoup" id="F4HW65">
    <property type="interactions" value="1334"/>
</dbReference>
<dbReference type="STRING" id="3702.F4HW65"/>
<dbReference type="iPTMnet" id="F4HW65"/>
<dbReference type="PaxDb" id="3702-AT1G14460.1"/>
<dbReference type="ProteomicsDB" id="228298"/>
<dbReference type="EnsemblPlants" id="AT1G14460.1">
    <property type="protein sequence ID" value="AT1G14460.1"/>
    <property type="gene ID" value="AT1G14460"/>
</dbReference>
<dbReference type="GeneID" id="838008"/>
<dbReference type="Gramene" id="AT1G14460.1">
    <property type="protein sequence ID" value="AT1G14460.1"/>
    <property type="gene ID" value="AT1G14460"/>
</dbReference>
<dbReference type="KEGG" id="ath:AT1G14460"/>
<dbReference type="Araport" id="AT1G14460"/>
<dbReference type="TAIR" id="AT1G14460"/>
<dbReference type="eggNOG" id="KOG0989">
    <property type="taxonomic scope" value="Eukaryota"/>
</dbReference>
<dbReference type="HOGENOM" id="CLU_009072_0_0_1"/>
<dbReference type="InParanoid" id="F4HW65"/>
<dbReference type="OMA" id="PETCSTW"/>
<dbReference type="PRO" id="PR:F4HW65"/>
<dbReference type="Proteomes" id="UP000006548">
    <property type="component" value="Chromosome 1"/>
</dbReference>
<dbReference type="ExpressionAtlas" id="F4HW65">
    <property type="expression patterns" value="baseline and differential"/>
</dbReference>
<dbReference type="GO" id="GO:0009360">
    <property type="term" value="C:DNA polymerase III complex"/>
    <property type="evidence" value="ECO:0007669"/>
    <property type="project" value="InterPro"/>
</dbReference>
<dbReference type="GO" id="GO:0005886">
    <property type="term" value="C:plasma membrane"/>
    <property type="evidence" value="ECO:0007005"/>
    <property type="project" value="TAIR"/>
</dbReference>
<dbReference type="GO" id="GO:0005524">
    <property type="term" value="F:ATP binding"/>
    <property type="evidence" value="ECO:0007669"/>
    <property type="project" value="UniProtKB-KW"/>
</dbReference>
<dbReference type="GO" id="GO:0016887">
    <property type="term" value="F:ATP hydrolysis activity"/>
    <property type="evidence" value="ECO:0007669"/>
    <property type="project" value="InterPro"/>
</dbReference>
<dbReference type="GO" id="GO:0003677">
    <property type="term" value="F:DNA binding"/>
    <property type="evidence" value="ECO:0007669"/>
    <property type="project" value="InterPro"/>
</dbReference>
<dbReference type="GO" id="GO:0003887">
    <property type="term" value="F:DNA-directed DNA polymerase activity"/>
    <property type="evidence" value="ECO:0007669"/>
    <property type="project" value="InterPro"/>
</dbReference>
<dbReference type="GO" id="GO:0046872">
    <property type="term" value="F:metal ion binding"/>
    <property type="evidence" value="ECO:0007669"/>
    <property type="project" value="UniProtKB-KW"/>
</dbReference>
<dbReference type="GO" id="GO:0006260">
    <property type="term" value="P:DNA replication"/>
    <property type="evidence" value="ECO:0007669"/>
    <property type="project" value="InterPro"/>
</dbReference>
<dbReference type="CDD" id="cd00009">
    <property type="entry name" value="AAA"/>
    <property type="match status" value="1"/>
</dbReference>
<dbReference type="CDD" id="cd18137">
    <property type="entry name" value="HLD_clamp_pol_III_gamma_tau"/>
    <property type="match status" value="1"/>
</dbReference>
<dbReference type="FunFam" id="1.10.8.60:FF:000013">
    <property type="entry name" value="DNA polymerase III subunit gamma/tau"/>
    <property type="match status" value="1"/>
</dbReference>
<dbReference type="FunFam" id="3.40.50.300:FF:000014">
    <property type="entry name" value="DNA polymerase III subunit gamma/tau"/>
    <property type="match status" value="1"/>
</dbReference>
<dbReference type="Gene3D" id="1.10.8.60">
    <property type="match status" value="1"/>
</dbReference>
<dbReference type="Gene3D" id="1.20.272.10">
    <property type="match status" value="1"/>
</dbReference>
<dbReference type="Gene3D" id="3.40.50.300">
    <property type="entry name" value="P-loop containing nucleotide triphosphate hydrolases"/>
    <property type="match status" value="1"/>
</dbReference>
<dbReference type="InterPro" id="IPR003593">
    <property type="entry name" value="AAA+_ATPase"/>
</dbReference>
<dbReference type="InterPro" id="IPR008921">
    <property type="entry name" value="DNA_pol3_clamp-load_cplx_C"/>
</dbReference>
<dbReference type="InterPro" id="IPR022754">
    <property type="entry name" value="DNA_pol_III_gamma-3"/>
</dbReference>
<dbReference type="InterPro" id="IPR012763">
    <property type="entry name" value="DNA_pol_III_sug/sutau_N"/>
</dbReference>
<dbReference type="InterPro" id="IPR050238">
    <property type="entry name" value="DNA_Rep/Repair_Clamp_Loader"/>
</dbReference>
<dbReference type="InterPro" id="IPR054506">
    <property type="entry name" value="DnaA_N-like_STI"/>
</dbReference>
<dbReference type="InterPro" id="IPR045085">
    <property type="entry name" value="HLD_clamp_pol_III_gamma_tau"/>
</dbReference>
<dbReference type="InterPro" id="IPR027417">
    <property type="entry name" value="P-loop_NTPase"/>
</dbReference>
<dbReference type="NCBIfam" id="TIGR02397">
    <property type="entry name" value="dnaX_nterm"/>
    <property type="match status" value="1"/>
</dbReference>
<dbReference type="PANTHER" id="PTHR11669:SF67">
    <property type="entry name" value="PROTEIN STICHEL-LIKE 1"/>
    <property type="match status" value="1"/>
</dbReference>
<dbReference type="PANTHER" id="PTHR11669">
    <property type="entry name" value="REPLICATION FACTOR C / DNA POLYMERASE III GAMMA-TAU SUBUNIT"/>
    <property type="match status" value="1"/>
</dbReference>
<dbReference type="Pfam" id="PF13177">
    <property type="entry name" value="DNA_pol3_delta2"/>
    <property type="match status" value="1"/>
</dbReference>
<dbReference type="Pfam" id="PF12169">
    <property type="entry name" value="DNA_pol3_gamma3"/>
    <property type="match status" value="1"/>
</dbReference>
<dbReference type="Pfam" id="PF23007">
    <property type="entry name" value="DnaA_N-like_STI"/>
    <property type="match status" value="1"/>
</dbReference>
<dbReference type="Pfam" id="PF22608">
    <property type="entry name" value="DNAX_ATPase_lid"/>
    <property type="match status" value="1"/>
</dbReference>
<dbReference type="SMART" id="SM00382">
    <property type="entry name" value="AAA"/>
    <property type="match status" value="1"/>
</dbReference>
<dbReference type="SUPFAM" id="SSF52540">
    <property type="entry name" value="P-loop containing nucleoside triphosphate hydrolases"/>
    <property type="match status" value="1"/>
</dbReference>
<dbReference type="SUPFAM" id="SSF48019">
    <property type="entry name" value="post-AAA+ oligomerization domain-like"/>
    <property type="match status" value="1"/>
</dbReference>
<protein>
    <recommendedName>
        <fullName>Protein STICHEL-like 1</fullName>
    </recommendedName>
</protein>
<sequence length="1116" mass="124891">MSGLRISDPSKLHLKKELTHIRKVASKGLRDPGTTSSWKSPLTSSRFVVEPPASNNVEILSNNQLDSQFPSSRVFGNNGKEKEKKVFLYNWKTQRTSSEKTEGEDETSWIQASLNDDDDDDDDVSDARNGGDSCLEETRSASMIRKSGFIKKKSKELDLSIGRKSTAKARNFPSHHLHVASGLSVVRDESDETEDFSNSENFPTKVSSPLLLKLKRKNWSRSSSKFLRGTSKREDSSHTCNSTPALSTSSYNMYGIRNPSTVGSWEDGDDELDDDNLDFKGRQGCGIPFYWTKRNLKHRGGCRSCCSPSFSDTLRRKGSSILCGSQSVYRRHRHSSGRFNKQKLALRSAKGVLPLLKYGGDSRGGSSIGIGYSDDDLSTDFGEIDLEAQSRLDGRRWSSCCKSQDGEREEEEEGGSTPESIQSLSQKYKPMFFDELIGQSIVVQSLMNAVKKGRVAHVYLFQGPRGTGKTSTARILSAALNCDVVTEEMKPCGYCKECSDYMLGKSRDLLELDAGKKNGAEKVRYLLKKLLTLAPQSSQRYKVFVIDECHLLPSRTWLSLLKFLENPLQKFVFVCITTDLDNVPRTIQSRCQKYIFNKVRDGDIVVRLRKIASDENLDVESQALDLIALNADGSLRDAETMLEQLSLMGKRITVDLVNELVGVVSDDKLLELLELALSSDTAETVKKARELLDLGADPILMMSQLASLIMDIIAGAYKALDEKYSEAFLDRRNLTEADLERLKHALKLLSEAEKQLRVSTDRSTWFIATLLQLGSMPSPGTTHTGSSRRQSSRATEESISREVIAYKQRSGLQCSNTASPTSIRKSGNLVREVKLSSSSSEVLESDTSMASHDDTTASTMTLTCRNSEKLNDIWIKCVDRCHSKTLKQLLYAHGKLLSISEVEGILVAYIAFGEGEIKARAERFVSSITNSIEMVLRRNVEVRIILLSETELLNSKQTRQIAVTTSSYTESGNEIPMKRIEAIIQEQRLETEWLQKTPGSQGRLKPERNQILPQEDTNGVKVLKICEMGEFQENQSGKRMEHCPVSPSLLHNSNFTNNKDNLGYESESGRGVCSLLFCWNTQKSPRRTKIKGTSMRSRRSRERRFSLFSACARPRK</sequence>
<gene>
    <name type="ordered locus">At1g14460</name>
    <name type="ORF">F14L17.24</name>
</gene>
<name>STIL1_ARATH</name>
<organism>
    <name type="scientific">Arabidopsis thaliana</name>
    <name type="common">Mouse-ear cress</name>
    <dbReference type="NCBI Taxonomy" id="3702"/>
    <lineage>
        <taxon>Eukaryota</taxon>
        <taxon>Viridiplantae</taxon>
        <taxon>Streptophyta</taxon>
        <taxon>Embryophyta</taxon>
        <taxon>Tracheophyta</taxon>
        <taxon>Spermatophyta</taxon>
        <taxon>Magnoliopsida</taxon>
        <taxon>eudicotyledons</taxon>
        <taxon>Gunneridae</taxon>
        <taxon>Pentapetalae</taxon>
        <taxon>rosids</taxon>
        <taxon>malvids</taxon>
        <taxon>Brassicales</taxon>
        <taxon>Brassicaceae</taxon>
        <taxon>Camelineae</taxon>
        <taxon>Arabidopsis</taxon>
    </lineage>
</organism>
<comment type="domain">
    <text evidence="1">PEST motif is known to mediate rapid protein degradation.</text>
</comment>
<comment type="similarity">
    <text evidence="5">Belongs to the DnaX/STICHEL family.</text>
</comment>
<comment type="sequence caution" evidence="5">
    <conflict type="erroneous gene model prediction">
        <sequence resource="EMBL-CDS" id="AAF43947"/>
    </conflict>
</comment>
<accession>F4HW65</accession>
<accession>Q9M9R7</accession>
<evidence type="ECO:0000250" key="1"/>
<evidence type="ECO:0000250" key="2">
    <source>
        <dbReference type="UniProtKB" id="P06710"/>
    </source>
</evidence>
<evidence type="ECO:0000255" key="3"/>
<evidence type="ECO:0000256" key="4">
    <source>
        <dbReference type="SAM" id="MobiDB-lite"/>
    </source>
</evidence>
<evidence type="ECO:0000305" key="5"/>
<reference key="1">
    <citation type="journal article" date="2000" name="Nature">
        <title>Sequence and analysis of chromosome 1 of the plant Arabidopsis thaliana.</title>
        <authorList>
            <person name="Theologis A."/>
            <person name="Ecker J.R."/>
            <person name="Palm C.J."/>
            <person name="Federspiel N.A."/>
            <person name="Kaul S."/>
            <person name="White O."/>
            <person name="Alonso J."/>
            <person name="Altafi H."/>
            <person name="Araujo R."/>
            <person name="Bowman C.L."/>
            <person name="Brooks S.Y."/>
            <person name="Buehler E."/>
            <person name="Chan A."/>
            <person name="Chao Q."/>
            <person name="Chen H."/>
            <person name="Cheuk R.F."/>
            <person name="Chin C.W."/>
            <person name="Chung M.K."/>
            <person name="Conn L."/>
            <person name="Conway A.B."/>
            <person name="Conway A.R."/>
            <person name="Creasy T.H."/>
            <person name="Dewar K."/>
            <person name="Dunn P."/>
            <person name="Etgu P."/>
            <person name="Feldblyum T.V."/>
            <person name="Feng J.-D."/>
            <person name="Fong B."/>
            <person name="Fujii C.Y."/>
            <person name="Gill J.E."/>
            <person name="Goldsmith A.D."/>
            <person name="Haas B."/>
            <person name="Hansen N.F."/>
            <person name="Hughes B."/>
            <person name="Huizar L."/>
            <person name="Hunter J.L."/>
            <person name="Jenkins J."/>
            <person name="Johnson-Hopson C."/>
            <person name="Khan S."/>
            <person name="Khaykin E."/>
            <person name="Kim C.J."/>
            <person name="Koo H.L."/>
            <person name="Kremenetskaia I."/>
            <person name="Kurtz D.B."/>
            <person name="Kwan A."/>
            <person name="Lam B."/>
            <person name="Langin-Hooper S."/>
            <person name="Lee A."/>
            <person name="Lee J.M."/>
            <person name="Lenz C.A."/>
            <person name="Li J.H."/>
            <person name="Li Y.-P."/>
            <person name="Lin X."/>
            <person name="Liu S.X."/>
            <person name="Liu Z.A."/>
            <person name="Luros J.S."/>
            <person name="Maiti R."/>
            <person name="Marziali A."/>
            <person name="Militscher J."/>
            <person name="Miranda M."/>
            <person name="Nguyen M."/>
            <person name="Nierman W.C."/>
            <person name="Osborne B.I."/>
            <person name="Pai G."/>
            <person name="Peterson J."/>
            <person name="Pham P.K."/>
            <person name="Rizzo M."/>
            <person name="Rooney T."/>
            <person name="Rowley D."/>
            <person name="Sakano H."/>
            <person name="Salzberg S.L."/>
            <person name="Schwartz J.R."/>
            <person name="Shinn P."/>
            <person name="Southwick A.M."/>
            <person name="Sun H."/>
            <person name="Tallon L.J."/>
            <person name="Tambunga G."/>
            <person name="Toriumi M.J."/>
            <person name="Town C.D."/>
            <person name="Utterback T."/>
            <person name="Van Aken S."/>
            <person name="Vaysberg M."/>
            <person name="Vysotskaia V.S."/>
            <person name="Walker M."/>
            <person name="Wu D."/>
            <person name="Yu G."/>
            <person name="Fraser C.M."/>
            <person name="Venter J.C."/>
            <person name="Davis R.W."/>
        </authorList>
    </citation>
    <scope>NUCLEOTIDE SEQUENCE [LARGE SCALE GENOMIC DNA]</scope>
    <source>
        <strain>cv. Columbia</strain>
    </source>
</reference>
<reference key="2">
    <citation type="journal article" date="2017" name="Plant J.">
        <title>Araport11: a complete reannotation of the Arabidopsis thaliana reference genome.</title>
        <authorList>
            <person name="Cheng C.Y."/>
            <person name="Krishnakumar V."/>
            <person name="Chan A.P."/>
            <person name="Thibaud-Nissen F."/>
            <person name="Schobel S."/>
            <person name="Town C.D."/>
        </authorList>
    </citation>
    <scope>GENOME REANNOTATION</scope>
    <source>
        <strain>cv. Columbia</strain>
    </source>
</reference>
<reference key="3">
    <citation type="journal article" date="2003" name="Mol. Cell. Proteomics">
        <title>Large-scale analysis of in vivo phosphorylated membrane proteins by immobilized metal ion affinity chromatography and mass spectrometry.</title>
        <authorList>
            <person name="Nuehse T.S."/>
            <person name="Stensballe A."/>
            <person name="Jensen O.N."/>
            <person name="Peck S.C."/>
        </authorList>
    </citation>
    <scope>IDENTIFICATION BY MASS SPECTROMETRY [LARGE SCALE ANALYSIS]</scope>
    <source>
        <strain>cv. La-0</strain>
    </source>
</reference>
<reference key="4">
    <citation type="journal article" date="2003" name="Plant Physiol.">
        <title>The Arabidopsis STICHEL gene is a regulator of trichome branch number and encodes a novel protein.</title>
        <authorList>
            <person name="Ilgenfritz H."/>
            <person name="Bouyer D."/>
            <person name="Schnittger A."/>
            <person name="Mathur J."/>
            <person name="Kirik V."/>
            <person name="Schwab B."/>
            <person name="Chua N.H."/>
            <person name="Juergens G."/>
            <person name="Huelskamp M."/>
        </authorList>
    </citation>
    <scope>GENE FAMILY</scope>
</reference>
<reference key="5">
    <citation type="journal article" date="2004" name="Plant Cell">
        <title>Phosphoproteomics of the Arabidopsis plasma membrane and a new phosphorylation site database.</title>
        <authorList>
            <person name="Nuehse T.S."/>
            <person name="Stensballe A."/>
            <person name="Jensen O.N."/>
            <person name="Peck S.C."/>
        </authorList>
    </citation>
    <scope>IDENTIFICATION BY MASS SPECTROMETRY [LARGE SCALE ANALYSIS]</scope>
</reference>
<feature type="chain" id="PRO_0000422977" description="Protein STICHEL-like 1">
    <location>
        <begin position="1"/>
        <end position="1116"/>
    </location>
</feature>
<feature type="region of interest" description="Disordered" evidence="4">
    <location>
        <begin position="95"/>
        <end position="138"/>
    </location>
</feature>
<feature type="region of interest" description="Disordered" evidence="4">
    <location>
        <begin position="225"/>
        <end position="244"/>
    </location>
</feature>
<feature type="region of interest" description="Disordered" evidence="4">
    <location>
        <begin position="777"/>
        <end position="798"/>
    </location>
</feature>
<feature type="coiled-coil region" evidence="3">
    <location>
        <begin position="726"/>
        <end position="760"/>
    </location>
</feature>
<feature type="short sequence motif" description="PEST 1" evidence="1">
    <location>
        <begin position="257"/>
        <end position="282"/>
    </location>
</feature>
<feature type="short sequence motif" description="PEST 2" evidence="1">
    <location>
        <begin position="402"/>
        <end position="422"/>
    </location>
</feature>
<feature type="compositionally biased region" description="Acidic residues" evidence="4">
    <location>
        <begin position="115"/>
        <end position="124"/>
    </location>
</feature>
<feature type="compositionally biased region" description="Polar residues" evidence="4">
    <location>
        <begin position="778"/>
        <end position="793"/>
    </location>
</feature>
<feature type="binding site" evidence="3">
    <location>
        <begin position="463"/>
        <end position="470"/>
    </location>
    <ligand>
        <name>ATP</name>
        <dbReference type="ChEBI" id="CHEBI:30616"/>
    </ligand>
</feature>
<feature type="binding site" evidence="2">
    <location>
        <position position="482"/>
    </location>
    <ligand>
        <name>Zn(2+)</name>
        <dbReference type="ChEBI" id="CHEBI:29105"/>
    </ligand>
</feature>
<feature type="binding site" evidence="2">
    <location>
        <position position="492"/>
    </location>
    <ligand>
        <name>Zn(2+)</name>
        <dbReference type="ChEBI" id="CHEBI:29105"/>
    </ligand>
</feature>
<feature type="binding site" evidence="2">
    <location>
        <position position="495"/>
    </location>
    <ligand>
        <name>Zn(2+)</name>
        <dbReference type="ChEBI" id="CHEBI:29105"/>
    </ligand>
</feature>
<feature type="binding site" evidence="2">
    <location>
        <position position="498"/>
    </location>
    <ligand>
        <name>Zn(2+)</name>
        <dbReference type="ChEBI" id="CHEBI:29105"/>
    </ligand>
</feature>